<gene>
    <name evidence="1" type="primary">ruvA</name>
    <name type="ordered locus">HP_0883</name>
</gene>
<protein>
    <recommendedName>
        <fullName evidence="1">Holliday junction branch migration complex subunit RuvA</fullName>
    </recommendedName>
</protein>
<organism>
    <name type="scientific">Helicobacter pylori (strain ATCC 700392 / 26695)</name>
    <name type="common">Campylobacter pylori</name>
    <dbReference type="NCBI Taxonomy" id="85962"/>
    <lineage>
        <taxon>Bacteria</taxon>
        <taxon>Pseudomonadati</taxon>
        <taxon>Campylobacterota</taxon>
        <taxon>Epsilonproteobacteria</taxon>
        <taxon>Campylobacterales</taxon>
        <taxon>Helicobacteraceae</taxon>
        <taxon>Helicobacter</taxon>
    </lineage>
</organism>
<proteinExistence type="inferred from homology"/>
<accession>O25549</accession>
<sequence length="183" mass="20176">MIVGLIGVVEKISALEVHIEVQGVVYGVQVSMRTAALLEAGQKARLKILQVIKEDAHLLYGFLEEGEKILFERLLKINGVGGRIALAILSSFSPNEFESIIATKEVKRLQQVPGIGKKLADKIMVDLIGFFIQDENRPARNEVFLALESLGFKSAEINQVLKTLKPNLSIEAAIKEALQQLRS</sequence>
<feature type="chain" id="PRO_0000094639" description="Holliday junction branch migration complex subunit RuvA">
    <location>
        <begin position="1"/>
        <end position="183"/>
    </location>
</feature>
<feature type="region of interest" description="Domain I" evidence="1">
    <location>
        <begin position="1"/>
        <end position="63"/>
    </location>
</feature>
<feature type="region of interest" description="Domain II" evidence="1">
    <location>
        <begin position="64"/>
        <end position="139"/>
    </location>
</feature>
<feature type="region of interest" description="Domain III" evidence="1">
    <location>
        <begin position="139"/>
        <end position="183"/>
    </location>
</feature>
<feature type="region of interest" description="Flexible linker" evidence="1">
    <location>
        <position position="139"/>
    </location>
</feature>
<dbReference type="EMBL" id="AE000511">
    <property type="protein sequence ID" value="AAD07932.1"/>
    <property type="molecule type" value="Genomic_DNA"/>
</dbReference>
<dbReference type="PIR" id="C64630">
    <property type="entry name" value="C64630"/>
</dbReference>
<dbReference type="RefSeq" id="NP_207676.1">
    <property type="nucleotide sequence ID" value="NC_000915.1"/>
</dbReference>
<dbReference type="RefSeq" id="WP_000635172.1">
    <property type="nucleotide sequence ID" value="NC_018939.1"/>
</dbReference>
<dbReference type="SMR" id="O25549"/>
<dbReference type="FunCoup" id="O25549">
    <property type="interactions" value="161"/>
</dbReference>
<dbReference type="IntAct" id="O25549">
    <property type="interactions" value="1"/>
</dbReference>
<dbReference type="STRING" id="85962.HP_0883"/>
<dbReference type="PaxDb" id="85962-C694_04525"/>
<dbReference type="EnsemblBacteria" id="AAD07932">
    <property type="protein sequence ID" value="AAD07932"/>
    <property type="gene ID" value="HP_0883"/>
</dbReference>
<dbReference type="KEGG" id="heo:C694_04525"/>
<dbReference type="KEGG" id="hpy:HP_0883"/>
<dbReference type="PATRIC" id="fig|85962.47.peg.939"/>
<dbReference type="eggNOG" id="COG0632">
    <property type="taxonomic scope" value="Bacteria"/>
</dbReference>
<dbReference type="InParanoid" id="O25549"/>
<dbReference type="OrthoDB" id="5293449at2"/>
<dbReference type="PhylomeDB" id="O25549"/>
<dbReference type="Proteomes" id="UP000000429">
    <property type="component" value="Chromosome"/>
</dbReference>
<dbReference type="GO" id="GO:0005737">
    <property type="term" value="C:cytoplasm"/>
    <property type="evidence" value="ECO:0007669"/>
    <property type="project" value="UniProtKB-SubCell"/>
</dbReference>
<dbReference type="GO" id="GO:0009379">
    <property type="term" value="C:Holliday junction helicase complex"/>
    <property type="evidence" value="ECO:0007669"/>
    <property type="project" value="InterPro"/>
</dbReference>
<dbReference type="GO" id="GO:0048476">
    <property type="term" value="C:Holliday junction resolvase complex"/>
    <property type="evidence" value="ECO:0007669"/>
    <property type="project" value="UniProtKB-UniRule"/>
</dbReference>
<dbReference type="GO" id="GO:0005524">
    <property type="term" value="F:ATP binding"/>
    <property type="evidence" value="ECO:0007669"/>
    <property type="project" value="InterPro"/>
</dbReference>
<dbReference type="GO" id="GO:0000400">
    <property type="term" value="F:four-way junction DNA binding"/>
    <property type="evidence" value="ECO:0007669"/>
    <property type="project" value="UniProtKB-UniRule"/>
</dbReference>
<dbReference type="GO" id="GO:0009378">
    <property type="term" value="F:four-way junction helicase activity"/>
    <property type="evidence" value="ECO:0000318"/>
    <property type="project" value="GO_Central"/>
</dbReference>
<dbReference type="GO" id="GO:0006310">
    <property type="term" value="P:DNA recombination"/>
    <property type="evidence" value="ECO:0007669"/>
    <property type="project" value="UniProtKB-UniRule"/>
</dbReference>
<dbReference type="GO" id="GO:0006281">
    <property type="term" value="P:DNA repair"/>
    <property type="evidence" value="ECO:0007669"/>
    <property type="project" value="UniProtKB-UniRule"/>
</dbReference>
<dbReference type="GO" id="GO:0009432">
    <property type="term" value="P:SOS response"/>
    <property type="evidence" value="ECO:0000318"/>
    <property type="project" value="GO_Central"/>
</dbReference>
<dbReference type="CDD" id="cd14332">
    <property type="entry name" value="UBA_RuvA_C"/>
    <property type="match status" value="1"/>
</dbReference>
<dbReference type="Gene3D" id="1.10.150.20">
    <property type="entry name" value="5' to 3' exonuclease, C-terminal subdomain"/>
    <property type="match status" value="1"/>
</dbReference>
<dbReference type="Gene3D" id="1.10.8.10">
    <property type="entry name" value="DNA helicase RuvA subunit, C-terminal domain"/>
    <property type="match status" value="1"/>
</dbReference>
<dbReference type="Gene3D" id="2.40.50.140">
    <property type="entry name" value="Nucleic acid-binding proteins"/>
    <property type="match status" value="1"/>
</dbReference>
<dbReference type="HAMAP" id="MF_00031">
    <property type="entry name" value="DNA_HJ_migration_RuvA"/>
    <property type="match status" value="1"/>
</dbReference>
<dbReference type="InterPro" id="IPR013849">
    <property type="entry name" value="DNA_helicase_Holl-junc_RuvA_I"/>
</dbReference>
<dbReference type="InterPro" id="IPR003583">
    <property type="entry name" value="Hlx-hairpin-Hlx_DNA-bd_motif"/>
</dbReference>
<dbReference type="InterPro" id="IPR012340">
    <property type="entry name" value="NA-bd_OB-fold"/>
</dbReference>
<dbReference type="InterPro" id="IPR000085">
    <property type="entry name" value="RuvA"/>
</dbReference>
<dbReference type="InterPro" id="IPR010994">
    <property type="entry name" value="RuvA_2-like"/>
</dbReference>
<dbReference type="InterPro" id="IPR011114">
    <property type="entry name" value="RuvA_C"/>
</dbReference>
<dbReference type="InterPro" id="IPR036267">
    <property type="entry name" value="RuvA_C_sf"/>
</dbReference>
<dbReference type="NCBIfam" id="TIGR00084">
    <property type="entry name" value="ruvA"/>
    <property type="match status" value="1"/>
</dbReference>
<dbReference type="Pfam" id="PF14520">
    <property type="entry name" value="HHH_5"/>
    <property type="match status" value="1"/>
</dbReference>
<dbReference type="Pfam" id="PF07499">
    <property type="entry name" value="RuvA_C"/>
    <property type="match status" value="1"/>
</dbReference>
<dbReference type="Pfam" id="PF01330">
    <property type="entry name" value="RuvA_N"/>
    <property type="match status" value="1"/>
</dbReference>
<dbReference type="SMART" id="SM00278">
    <property type="entry name" value="HhH1"/>
    <property type="match status" value="2"/>
</dbReference>
<dbReference type="SUPFAM" id="SSF46929">
    <property type="entry name" value="DNA helicase RuvA subunit, C-terminal domain"/>
    <property type="match status" value="1"/>
</dbReference>
<dbReference type="SUPFAM" id="SSF50249">
    <property type="entry name" value="Nucleic acid-binding proteins"/>
    <property type="match status" value="1"/>
</dbReference>
<dbReference type="SUPFAM" id="SSF47781">
    <property type="entry name" value="RuvA domain 2-like"/>
    <property type="match status" value="1"/>
</dbReference>
<keyword id="KW-0963">Cytoplasm</keyword>
<keyword id="KW-0227">DNA damage</keyword>
<keyword id="KW-0233">DNA recombination</keyword>
<keyword id="KW-0234">DNA repair</keyword>
<keyword id="KW-0238">DNA-binding</keyword>
<keyword id="KW-1185">Reference proteome</keyword>
<comment type="function">
    <text evidence="1">The RuvA-RuvB-RuvC complex processes Holliday junction (HJ) DNA during genetic recombination and DNA repair, while the RuvA-RuvB complex plays an important role in the rescue of blocked DNA replication forks via replication fork reversal (RFR). RuvA specifically binds to HJ cruciform DNA, conferring on it an open structure. The RuvB hexamer acts as an ATP-dependent pump, pulling dsDNA into and through the RuvAB complex. HJ branch migration allows RuvC to scan DNA until it finds its consensus sequence, where it cleaves and resolves the cruciform DNA.</text>
</comment>
<comment type="subunit">
    <text evidence="1">Homotetramer. Forms an RuvA(8)-RuvB(12)-Holliday junction (HJ) complex. HJ DNA is sandwiched between 2 RuvA tetramers; dsDNA enters through RuvA and exits via RuvB. An RuvB hexamer assembles on each DNA strand where it exits the tetramer. Each RuvB hexamer is contacted by two RuvA subunits (via domain III) on 2 adjacent RuvB subunits; this complex drives branch migration. In the full resolvosome a probable DNA-RuvA(4)-RuvB(12)-RuvC(2) complex forms which resolves the HJ.</text>
</comment>
<comment type="subcellular location">
    <subcellularLocation>
        <location evidence="1">Cytoplasm</location>
    </subcellularLocation>
</comment>
<comment type="domain">
    <text evidence="1">Has three domains with a flexible linker between the domains II and III and assumes an 'L' shape. Domain III is highly mobile and contacts RuvB.</text>
</comment>
<comment type="similarity">
    <text evidence="1">Belongs to the RuvA family.</text>
</comment>
<evidence type="ECO:0000255" key="1">
    <source>
        <dbReference type="HAMAP-Rule" id="MF_00031"/>
    </source>
</evidence>
<reference key="1">
    <citation type="journal article" date="1997" name="Nature">
        <title>The complete genome sequence of the gastric pathogen Helicobacter pylori.</title>
        <authorList>
            <person name="Tomb J.-F."/>
            <person name="White O."/>
            <person name="Kerlavage A.R."/>
            <person name="Clayton R.A."/>
            <person name="Sutton G.G."/>
            <person name="Fleischmann R.D."/>
            <person name="Ketchum K.A."/>
            <person name="Klenk H.-P."/>
            <person name="Gill S.R."/>
            <person name="Dougherty B.A."/>
            <person name="Nelson K.E."/>
            <person name="Quackenbush J."/>
            <person name="Zhou L."/>
            <person name="Kirkness E.F."/>
            <person name="Peterson S.N."/>
            <person name="Loftus B.J."/>
            <person name="Richardson D.L."/>
            <person name="Dodson R.J."/>
            <person name="Khalak H.G."/>
            <person name="Glodek A."/>
            <person name="McKenney K."/>
            <person name="FitzGerald L.M."/>
            <person name="Lee N."/>
            <person name="Adams M.D."/>
            <person name="Hickey E.K."/>
            <person name="Berg D.E."/>
            <person name="Gocayne J.D."/>
            <person name="Utterback T.R."/>
            <person name="Peterson J.D."/>
            <person name="Kelley J.M."/>
            <person name="Cotton M.D."/>
            <person name="Weidman J.F."/>
            <person name="Fujii C."/>
            <person name="Bowman C."/>
            <person name="Watthey L."/>
            <person name="Wallin E."/>
            <person name="Hayes W.S."/>
            <person name="Borodovsky M."/>
            <person name="Karp P.D."/>
            <person name="Smith H.O."/>
            <person name="Fraser C.M."/>
            <person name="Venter J.C."/>
        </authorList>
    </citation>
    <scope>NUCLEOTIDE SEQUENCE [LARGE SCALE GENOMIC DNA]</scope>
    <source>
        <strain>ATCC 700392 / 26695</strain>
    </source>
</reference>
<name>RUVA_HELPY</name>